<feature type="chain" id="PRO_1000186483" description="Bifunctional protein GlmU">
    <location>
        <begin position="1"/>
        <end position="456"/>
    </location>
</feature>
<feature type="region of interest" description="Pyrophosphorylase" evidence="1">
    <location>
        <begin position="1"/>
        <end position="229"/>
    </location>
</feature>
<feature type="region of interest" description="Linker" evidence="1">
    <location>
        <begin position="230"/>
        <end position="250"/>
    </location>
</feature>
<feature type="region of interest" description="N-acetyltransferase" evidence="1">
    <location>
        <begin position="251"/>
        <end position="456"/>
    </location>
</feature>
<feature type="active site" description="Proton acceptor" evidence="1">
    <location>
        <position position="363"/>
    </location>
</feature>
<feature type="binding site" evidence="1">
    <location>
        <begin position="11"/>
        <end position="14"/>
    </location>
    <ligand>
        <name>UDP-N-acetyl-alpha-D-glucosamine</name>
        <dbReference type="ChEBI" id="CHEBI:57705"/>
    </ligand>
</feature>
<feature type="binding site" evidence="1">
    <location>
        <position position="25"/>
    </location>
    <ligand>
        <name>UDP-N-acetyl-alpha-D-glucosamine</name>
        <dbReference type="ChEBI" id="CHEBI:57705"/>
    </ligand>
</feature>
<feature type="binding site" evidence="1">
    <location>
        <position position="76"/>
    </location>
    <ligand>
        <name>UDP-N-acetyl-alpha-D-glucosamine</name>
        <dbReference type="ChEBI" id="CHEBI:57705"/>
    </ligand>
</feature>
<feature type="binding site" evidence="1">
    <location>
        <begin position="81"/>
        <end position="82"/>
    </location>
    <ligand>
        <name>UDP-N-acetyl-alpha-D-glucosamine</name>
        <dbReference type="ChEBI" id="CHEBI:57705"/>
    </ligand>
</feature>
<feature type="binding site" evidence="1">
    <location>
        <begin position="103"/>
        <end position="105"/>
    </location>
    <ligand>
        <name>UDP-N-acetyl-alpha-D-glucosamine</name>
        <dbReference type="ChEBI" id="CHEBI:57705"/>
    </ligand>
</feature>
<feature type="binding site" evidence="1">
    <location>
        <position position="105"/>
    </location>
    <ligand>
        <name>Mg(2+)</name>
        <dbReference type="ChEBI" id="CHEBI:18420"/>
    </ligand>
</feature>
<feature type="binding site" evidence="1">
    <location>
        <position position="140"/>
    </location>
    <ligand>
        <name>UDP-N-acetyl-alpha-D-glucosamine</name>
        <dbReference type="ChEBI" id="CHEBI:57705"/>
    </ligand>
</feature>
<feature type="binding site" evidence="1">
    <location>
        <position position="154"/>
    </location>
    <ligand>
        <name>UDP-N-acetyl-alpha-D-glucosamine</name>
        <dbReference type="ChEBI" id="CHEBI:57705"/>
    </ligand>
</feature>
<feature type="binding site" evidence="1">
    <location>
        <position position="169"/>
    </location>
    <ligand>
        <name>UDP-N-acetyl-alpha-D-glucosamine</name>
        <dbReference type="ChEBI" id="CHEBI:57705"/>
    </ligand>
</feature>
<feature type="binding site" evidence="1">
    <location>
        <position position="227"/>
    </location>
    <ligand>
        <name>Mg(2+)</name>
        <dbReference type="ChEBI" id="CHEBI:18420"/>
    </ligand>
</feature>
<feature type="binding site" evidence="1">
    <location>
        <position position="227"/>
    </location>
    <ligand>
        <name>UDP-N-acetyl-alpha-D-glucosamine</name>
        <dbReference type="ChEBI" id="CHEBI:57705"/>
    </ligand>
</feature>
<feature type="binding site" evidence="1">
    <location>
        <position position="333"/>
    </location>
    <ligand>
        <name>UDP-N-acetyl-alpha-D-glucosamine</name>
        <dbReference type="ChEBI" id="CHEBI:57705"/>
    </ligand>
</feature>
<feature type="binding site" evidence="1">
    <location>
        <position position="351"/>
    </location>
    <ligand>
        <name>UDP-N-acetyl-alpha-D-glucosamine</name>
        <dbReference type="ChEBI" id="CHEBI:57705"/>
    </ligand>
</feature>
<feature type="binding site" evidence="1">
    <location>
        <position position="366"/>
    </location>
    <ligand>
        <name>UDP-N-acetyl-alpha-D-glucosamine</name>
        <dbReference type="ChEBI" id="CHEBI:57705"/>
    </ligand>
</feature>
<feature type="binding site" evidence="1">
    <location>
        <position position="377"/>
    </location>
    <ligand>
        <name>UDP-N-acetyl-alpha-D-glucosamine</name>
        <dbReference type="ChEBI" id="CHEBI:57705"/>
    </ligand>
</feature>
<feature type="binding site" evidence="1">
    <location>
        <position position="380"/>
    </location>
    <ligand>
        <name>acetyl-CoA</name>
        <dbReference type="ChEBI" id="CHEBI:57288"/>
    </ligand>
</feature>
<feature type="binding site" evidence="1">
    <location>
        <begin position="386"/>
        <end position="387"/>
    </location>
    <ligand>
        <name>acetyl-CoA</name>
        <dbReference type="ChEBI" id="CHEBI:57288"/>
    </ligand>
</feature>
<feature type="binding site" evidence="1">
    <location>
        <position position="405"/>
    </location>
    <ligand>
        <name>acetyl-CoA</name>
        <dbReference type="ChEBI" id="CHEBI:57288"/>
    </ligand>
</feature>
<feature type="binding site" evidence="1">
    <location>
        <position position="423"/>
    </location>
    <ligand>
        <name>acetyl-CoA</name>
        <dbReference type="ChEBI" id="CHEBI:57288"/>
    </ligand>
</feature>
<feature type="binding site" evidence="1">
    <location>
        <position position="440"/>
    </location>
    <ligand>
        <name>acetyl-CoA</name>
        <dbReference type="ChEBI" id="CHEBI:57288"/>
    </ligand>
</feature>
<protein>
    <recommendedName>
        <fullName evidence="1">Bifunctional protein GlmU</fullName>
    </recommendedName>
    <domain>
        <recommendedName>
            <fullName evidence="1">UDP-N-acetylglucosamine pyrophosphorylase</fullName>
            <ecNumber evidence="1">2.7.7.23</ecNumber>
        </recommendedName>
        <alternativeName>
            <fullName evidence="1">N-acetylglucosamine-1-phosphate uridyltransferase</fullName>
        </alternativeName>
    </domain>
    <domain>
        <recommendedName>
            <fullName evidence="1">Glucosamine-1-phosphate N-acetyltransferase</fullName>
            <ecNumber evidence="1">2.3.1.157</ecNumber>
        </recommendedName>
    </domain>
</protein>
<dbReference type="EC" id="2.7.7.23" evidence="1"/>
<dbReference type="EC" id="2.3.1.157" evidence="1"/>
<dbReference type="EMBL" id="AM933173">
    <property type="protein sequence ID" value="CAR39360.1"/>
    <property type="molecule type" value="Genomic_DNA"/>
</dbReference>
<dbReference type="RefSeq" id="WP_000934842.1">
    <property type="nucleotide sequence ID" value="NC_011274.1"/>
</dbReference>
<dbReference type="SMR" id="B5RFW6"/>
<dbReference type="KEGG" id="seg:SG3571"/>
<dbReference type="HOGENOM" id="CLU_029499_15_2_6"/>
<dbReference type="UniPathway" id="UPA00113">
    <property type="reaction ID" value="UER00532"/>
</dbReference>
<dbReference type="UniPathway" id="UPA00113">
    <property type="reaction ID" value="UER00533"/>
</dbReference>
<dbReference type="UniPathway" id="UPA00973"/>
<dbReference type="Proteomes" id="UP000008321">
    <property type="component" value="Chromosome"/>
</dbReference>
<dbReference type="GO" id="GO:0005737">
    <property type="term" value="C:cytoplasm"/>
    <property type="evidence" value="ECO:0007669"/>
    <property type="project" value="UniProtKB-SubCell"/>
</dbReference>
<dbReference type="GO" id="GO:0016020">
    <property type="term" value="C:membrane"/>
    <property type="evidence" value="ECO:0007669"/>
    <property type="project" value="GOC"/>
</dbReference>
<dbReference type="GO" id="GO:0019134">
    <property type="term" value="F:glucosamine-1-phosphate N-acetyltransferase activity"/>
    <property type="evidence" value="ECO:0007669"/>
    <property type="project" value="UniProtKB-UniRule"/>
</dbReference>
<dbReference type="GO" id="GO:0000287">
    <property type="term" value="F:magnesium ion binding"/>
    <property type="evidence" value="ECO:0007669"/>
    <property type="project" value="UniProtKB-UniRule"/>
</dbReference>
<dbReference type="GO" id="GO:0003977">
    <property type="term" value="F:UDP-N-acetylglucosamine diphosphorylase activity"/>
    <property type="evidence" value="ECO:0007669"/>
    <property type="project" value="UniProtKB-UniRule"/>
</dbReference>
<dbReference type="GO" id="GO:0000902">
    <property type="term" value="P:cell morphogenesis"/>
    <property type="evidence" value="ECO:0007669"/>
    <property type="project" value="UniProtKB-UniRule"/>
</dbReference>
<dbReference type="GO" id="GO:0071555">
    <property type="term" value="P:cell wall organization"/>
    <property type="evidence" value="ECO:0007669"/>
    <property type="project" value="UniProtKB-KW"/>
</dbReference>
<dbReference type="GO" id="GO:0009245">
    <property type="term" value="P:lipid A biosynthetic process"/>
    <property type="evidence" value="ECO:0007669"/>
    <property type="project" value="UniProtKB-UniRule"/>
</dbReference>
<dbReference type="GO" id="GO:0009252">
    <property type="term" value="P:peptidoglycan biosynthetic process"/>
    <property type="evidence" value="ECO:0007669"/>
    <property type="project" value="UniProtKB-UniRule"/>
</dbReference>
<dbReference type="GO" id="GO:0008360">
    <property type="term" value="P:regulation of cell shape"/>
    <property type="evidence" value="ECO:0007669"/>
    <property type="project" value="UniProtKB-KW"/>
</dbReference>
<dbReference type="GO" id="GO:0006048">
    <property type="term" value="P:UDP-N-acetylglucosamine biosynthetic process"/>
    <property type="evidence" value="ECO:0007669"/>
    <property type="project" value="UniProtKB-UniPathway"/>
</dbReference>
<dbReference type="CDD" id="cd02540">
    <property type="entry name" value="GT2_GlmU_N_bac"/>
    <property type="match status" value="1"/>
</dbReference>
<dbReference type="CDD" id="cd03353">
    <property type="entry name" value="LbH_GlmU_C"/>
    <property type="match status" value="1"/>
</dbReference>
<dbReference type="FunFam" id="2.160.10.10:FF:000011">
    <property type="entry name" value="Bifunctional protein GlmU"/>
    <property type="match status" value="1"/>
</dbReference>
<dbReference type="FunFam" id="3.90.550.10:FF:000006">
    <property type="entry name" value="Bifunctional protein GlmU"/>
    <property type="match status" value="1"/>
</dbReference>
<dbReference type="Gene3D" id="2.160.10.10">
    <property type="entry name" value="Hexapeptide repeat proteins"/>
    <property type="match status" value="1"/>
</dbReference>
<dbReference type="Gene3D" id="3.90.550.10">
    <property type="entry name" value="Spore Coat Polysaccharide Biosynthesis Protein SpsA, Chain A"/>
    <property type="match status" value="1"/>
</dbReference>
<dbReference type="HAMAP" id="MF_01631">
    <property type="entry name" value="GlmU"/>
    <property type="match status" value="1"/>
</dbReference>
<dbReference type="InterPro" id="IPR005882">
    <property type="entry name" value="Bifunctional_GlmU"/>
</dbReference>
<dbReference type="InterPro" id="IPR050065">
    <property type="entry name" value="GlmU-like"/>
</dbReference>
<dbReference type="InterPro" id="IPR038009">
    <property type="entry name" value="GlmU_C_LbH"/>
</dbReference>
<dbReference type="InterPro" id="IPR001451">
    <property type="entry name" value="Hexapep"/>
</dbReference>
<dbReference type="InterPro" id="IPR018357">
    <property type="entry name" value="Hexapep_transf_CS"/>
</dbReference>
<dbReference type="InterPro" id="IPR025877">
    <property type="entry name" value="MobA-like_NTP_Trfase"/>
</dbReference>
<dbReference type="InterPro" id="IPR029044">
    <property type="entry name" value="Nucleotide-diphossugar_trans"/>
</dbReference>
<dbReference type="InterPro" id="IPR011004">
    <property type="entry name" value="Trimer_LpxA-like_sf"/>
</dbReference>
<dbReference type="NCBIfam" id="TIGR01173">
    <property type="entry name" value="glmU"/>
    <property type="match status" value="1"/>
</dbReference>
<dbReference type="NCBIfam" id="NF006986">
    <property type="entry name" value="PRK09451.1"/>
    <property type="match status" value="1"/>
</dbReference>
<dbReference type="PANTHER" id="PTHR43584:SF3">
    <property type="entry name" value="BIFUNCTIONAL PROTEIN GLMU"/>
    <property type="match status" value="1"/>
</dbReference>
<dbReference type="PANTHER" id="PTHR43584">
    <property type="entry name" value="NUCLEOTIDYL TRANSFERASE"/>
    <property type="match status" value="1"/>
</dbReference>
<dbReference type="Pfam" id="PF00132">
    <property type="entry name" value="Hexapep"/>
    <property type="match status" value="1"/>
</dbReference>
<dbReference type="Pfam" id="PF12804">
    <property type="entry name" value="NTP_transf_3"/>
    <property type="match status" value="1"/>
</dbReference>
<dbReference type="SUPFAM" id="SSF53448">
    <property type="entry name" value="Nucleotide-diphospho-sugar transferases"/>
    <property type="match status" value="1"/>
</dbReference>
<dbReference type="SUPFAM" id="SSF51161">
    <property type="entry name" value="Trimeric LpxA-like enzymes"/>
    <property type="match status" value="1"/>
</dbReference>
<dbReference type="PROSITE" id="PS00101">
    <property type="entry name" value="HEXAPEP_TRANSFERASES"/>
    <property type="match status" value="1"/>
</dbReference>
<organism>
    <name type="scientific">Salmonella gallinarum (strain 287/91 / NCTC 13346)</name>
    <dbReference type="NCBI Taxonomy" id="550538"/>
    <lineage>
        <taxon>Bacteria</taxon>
        <taxon>Pseudomonadati</taxon>
        <taxon>Pseudomonadota</taxon>
        <taxon>Gammaproteobacteria</taxon>
        <taxon>Enterobacterales</taxon>
        <taxon>Enterobacteriaceae</taxon>
        <taxon>Salmonella</taxon>
    </lineage>
</organism>
<name>GLMU_SALG2</name>
<accession>B5RFW6</accession>
<reference key="1">
    <citation type="journal article" date="2008" name="Genome Res.">
        <title>Comparative genome analysis of Salmonella enteritidis PT4 and Salmonella gallinarum 287/91 provides insights into evolutionary and host adaptation pathways.</title>
        <authorList>
            <person name="Thomson N.R."/>
            <person name="Clayton D.J."/>
            <person name="Windhorst D."/>
            <person name="Vernikos G."/>
            <person name="Davidson S."/>
            <person name="Churcher C."/>
            <person name="Quail M.A."/>
            <person name="Stevens M."/>
            <person name="Jones M.A."/>
            <person name="Watson M."/>
            <person name="Barron A."/>
            <person name="Layton A."/>
            <person name="Pickard D."/>
            <person name="Kingsley R.A."/>
            <person name="Bignell A."/>
            <person name="Clark L."/>
            <person name="Harris B."/>
            <person name="Ormond D."/>
            <person name="Abdellah Z."/>
            <person name="Brooks K."/>
            <person name="Cherevach I."/>
            <person name="Chillingworth T."/>
            <person name="Woodward J."/>
            <person name="Norberczak H."/>
            <person name="Lord A."/>
            <person name="Arrowsmith C."/>
            <person name="Jagels K."/>
            <person name="Moule S."/>
            <person name="Mungall K."/>
            <person name="Saunders M."/>
            <person name="Whitehead S."/>
            <person name="Chabalgoity J.A."/>
            <person name="Maskell D."/>
            <person name="Humphreys T."/>
            <person name="Roberts M."/>
            <person name="Barrow P.A."/>
            <person name="Dougan G."/>
            <person name="Parkhill J."/>
        </authorList>
    </citation>
    <scope>NUCLEOTIDE SEQUENCE [LARGE SCALE GENOMIC DNA]</scope>
    <source>
        <strain>287/91 / NCTC 13346</strain>
    </source>
</reference>
<proteinExistence type="inferred from homology"/>
<sequence>MLNSAMSVVILAAGKGTRMYSDIPKVLHTLAGKPMVQHVIDAATKLGAAQVHLVYGHGGELLKQTLKDDKLNWVLQAEQLGTGHAMQKAAPFFSDDEDILMLYGDVPLISVETLQRLRDAKPQGGIGLLTVKLDDPSGYGRITRENGKVTGIVEHKDATDEQRQIQEINTGILIANGADLKRWLSKLTNNNAQGEYYITDIIALAYQEGREIAAVYPARISETDGVNNRLQLSRLERIYQAEQAEKLLLSGVMLRDPARFDLRGTLHCGMDVEIDANVIIEGYVTLGHRVKIGAGCIIKNSVIGDDCEISPYSVVEDAHLEAACTIGPFARLRPGAELLAGAHVGNFVEMKKARLGKGSKAGHLTYLGDAEIGDNVNIGAGTITCNYDGANKFKTVIGDDVFVGSDTQLVAPVTVGKGATIAAGTTVTRNVADNELVLSRVPQVHKQGWQRPVKKK</sequence>
<keyword id="KW-0012">Acyltransferase</keyword>
<keyword id="KW-0133">Cell shape</keyword>
<keyword id="KW-0961">Cell wall biogenesis/degradation</keyword>
<keyword id="KW-0963">Cytoplasm</keyword>
<keyword id="KW-0460">Magnesium</keyword>
<keyword id="KW-0479">Metal-binding</keyword>
<keyword id="KW-0511">Multifunctional enzyme</keyword>
<keyword id="KW-0548">Nucleotidyltransferase</keyword>
<keyword id="KW-0573">Peptidoglycan synthesis</keyword>
<keyword id="KW-0677">Repeat</keyword>
<keyword id="KW-0808">Transferase</keyword>
<gene>
    <name evidence="1" type="primary">glmU</name>
    <name type="ordered locus">SG3571</name>
</gene>
<comment type="function">
    <text evidence="1">Catalyzes the last two sequential reactions in the de novo biosynthetic pathway for UDP-N-acetylglucosamine (UDP-GlcNAc). The C-terminal domain catalyzes the transfer of acetyl group from acetyl coenzyme A to glucosamine-1-phosphate (GlcN-1-P) to produce N-acetylglucosamine-1-phosphate (GlcNAc-1-P), which is converted into UDP-GlcNAc by the transfer of uridine 5-monophosphate (from uridine 5-triphosphate), a reaction catalyzed by the N-terminal domain.</text>
</comment>
<comment type="catalytic activity">
    <reaction evidence="1">
        <text>alpha-D-glucosamine 1-phosphate + acetyl-CoA = N-acetyl-alpha-D-glucosamine 1-phosphate + CoA + H(+)</text>
        <dbReference type="Rhea" id="RHEA:13725"/>
        <dbReference type="ChEBI" id="CHEBI:15378"/>
        <dbReference type="ChEBI" id="CHEBI:57287"/>
        <dbReference type="ChEBI" id="CHEBI:57288"/>
        <dbReference type="ChEBI" id="CHEBI:57776"/>
        <dbReference type="ChEBI" id="CHEBI:58516"/>
        <dbReference type="EC" id="2.3.1.157"/>
    </reaction>
</comment>
<comment type="catalytic activity">
    <reaction evidence="1">
        <text>N-acetyl-alpha-D-glucosamine 1-phosphate + UTP + H(+) = UDP-N-acetyl-alpha-D-glucosamine + diphosphate</text>
        <dbReference type="Rhea" id="RHEA:13509"/>
        <dbReference type="ChEBI" id="CHEBI:15378"/>
        <dbReference type="ChEBI" id="CHEBI:33019"/>
        <dbReference type="ChEBI" id="CHEBI:46398"/>
        <dbReference type="ChEBI" id="CHEBI:57705"/>
        <dbReference type="ChEBI" id="CHEBI:57776"/>
        <dbReference type="EC" id="2.7.7.23"/>
    </reaction>
</comment>
<comment type="cofactor">
    <cofactor evidence="1">
        <name>Mg(2+)</name>
        <dbReference type="ChEBI" id="CHEBI:18420"/>
    </cofactor>
    <text evidence="1">Binds 1 Mg(2+) ion per subunit.</text>
</comment>
<comment type="pathway">
    <text evidence="1">Nucleotide-sugar biosynthesis; UDP-N-acetyl-alpha-D-glucosamine biosynthesis; N-acetyl-alpha-D-glucosamine 1-phosphate from alpha-D-glucosamine 6-phosphate (route II): step 2/2.</text>
</comment>
<comment type="pathway">
    <text evidence="1">Nucleotide-sugar biosynthesis; UDP-N-acetyl-alpha-D-glucosamine biosynthesis; UDP-N-acetyl-alpha-D-glucosamine from N-acetyl-alpha-D-glucosamine 1-phosphate: step 1/1.</text>
</comment>
<comment type="pathway">
    <text evidence="1">Bacterial outer membrane biogenesis; LPS lipid A biosynthesis.</text>
</comment>
<comment type="subunit">
    <text evidence="1">Homotrimer.</text>
</comment>
<comment type="subcellular location">
    <subcellularLocation>
        <location evidence="1">Cytoplasm</location>
    </subcellularLocation>
</comment>
<comment type="similarity">
    <text evidence="1">In the N-terminal section; belongs to the N-acetylglucosamine-1-phosphate uridyltransferase family.</text>
</comment>
<comment type="similarity">
    <text evidence="1">In the C-terminal section; belongs to the transferase hexapeptide repeat family.</text>
</comment>
<evidence type="ECO:0000255" key="1">
    <source>
        <dbReference type="HAMAP-Rule" id="MF_01631"/>
    </source>
</evidence>